<keyword id="KW-0025">Alternative splicing</keyword>
<keyword id="KW-0053">Apoptosis</keyword>
<keyword id="KW-0175">Coiled coil</keyword>
<keyword id="KW-0963">Cytoplasm</keyword>
<keyword id="KW-0225">Disease variant</keyword>
<keyword id="KW-0597">Phosphoprotein</keyword>
<keyword id="KW-1267">Proteomics identification</keyword>
<keyword id="KW-1185">Reference proteome</keyword>
<proteinExistence type="evidence at protein level"/>
<reference key="1">
    <citation type="journal article" date="2001" name="J. Biol. Chem.">
        <title>CARD11 and CARD14 are novel caspase recruitment domain (CARD)/membrane-associated guanylate kinase (MAGUK) family members that interact with Bcl10 and activate NF-kappaB.</title>
        <authorList>
            <person name="Bertin J."/>
            <person name="Wang L."/>
            <person name="Guo Y."/>
            <person name="Jacobson M.D."/>
            <person name="Poyet J.-L."/>
            <person name="Srinivasula S.M."/>
            <person name="Merriam S."/>
            <person name="DiStefano P.S."/>
            <person name="Alnemri E.S."/>
        </authorList>
    </citation>
    <scope>NUCLEOTIDE SEQUENCE [MRNA] (ISOFORM 1)</scope>
    <scope>FUNCTION</scope>
    <scope>VARIANT TRP-820</scope>
</reference>
<reference key="2">
    <citation type="journal article" date="2001" name="FEBS Lett.">
        <title>Carma1, a CARD-containing binding partner of Bcl10, induces Bcl10 phosphorylation and NF-kappaB activation.</title>
        <authorList>
            <person name="Gaide O."/>
            <person name="Martinon F."/>
            <person name="Micheau O."/>
            <person name="Bonnet D."/>
            <person name="Thome M."/>
            <person name="Tschopp J."/>
        </authorList>
    </citation>
    <scope>NUCLEOTIDE SEQUENCE [MRNA] (ISOFORM 1)</scope>
    <scope>VARIANT TRP-820</scope>
</reference>
<reference key="3">
    <citation type="journal article" date="2001" name="FEBS Lett.">
        <authorList>
            <person name="Gaide O."/>
            <person name="Martinon F."/>
            <person name="Micheau O."/>
            <person name="Bonnet D."/>
            <person name="Thome M."/>
            <person name="Tschopp J."/>
        </authorList>
    </citation>
    <scope>ERRATUM OF PUBMED:11356195</scope>
</reference>
<reference key="4">
    <citation type="journal article" date="2011" name="J. Cell. Physiol.">
        <title>Alternative splicing of CARMA2/CARD14 transcripts generates protein variants with differential effect on NF-kappaB activation and endoplasmic reticulum stress-induced cell death.</title>
        <authorList>
            <person name="Scudiero I."/>
            <person name="Zotti T."/>
            <person name="Ferravante A."/>
            <person name="Vessichelli M."/>
            <person name="Vito P."/>
            <person name="Stilo R."/>
        </authorList>
    </citation>
    <scope>NUCLEOTIDE SEQUENCE [MRNA] (ISOFORMS 1; 2 AND 3)</scope>
    <scope>FUNCTION</scope>
    <scope>INTERACTION WITH BCL10; TRAF2; TRAF3 AND TRAF6</scope>
    <scope>SUBCELLULAR LOCATION</scope>
    <scope>ALTERNATIVE SPLICING</scope>
</reference>
<reference key="5">
    <citation type="journal article" date="2006" name="Nature">
        <title>DNA sequence of human chromosome 17 and analysis of rearrangement in the human lineage.</title>
        <authorList>
            <person name="Zody M.C."/>
            <person name="Garber M."/>
            <person name="Adams D.J."/>
            <person name="Sharpe T."/>
            <person name="Harrow J."/>
            <person name="Lupski J.R."/>
            <person name="Nicholson C."/>
            <person name="Searle S.M."/>
            <person name="Wilming L."/>
            <person name="Young S.K."/>
            <person name="Abouelleil A."/>
            <person name="Allen N.R."/>
            <person name="Bi W."/>
            <person name="Bloom T."/>
            <person name="Borowsky M.L."/>
            <person name="Bugalter B.E."/>
            <person name="Butler J."/>
            <person name="Chang J.L."/>
            <person name="Chen C.-K."/>
            <person name="Cook A."/>
            <person name="Corum B."/>
            <person name="Cuomo C.A."/>
            <person name="de Jong P.J."/>
            <person name="DeCaprio D."/>
            <person name="Dewar K."/>
            <person name="FitzGerald M."/>
            <person name="Gilbert J."/>
            <person name="Gibson R."/>
            <person name="Gnerre S."/>
            <person name="Goldstein S."/>
            <person name="Grafham D.V."/>
            <person name="Grocock R."/>
            <person name="Hafez N."/>
            <person name="Hagopian D.S."/>
            <person name="Hart E."/>
            <person name="Norman C.H."/>
            <person name="Humphray S."/>
            <person name="Jaffe D.B."/>
            <person name="Jones M."/>
            <person name="Kamal M."/>
            <person name="Khodiyar V.K."/>
            <person name="LaButti K."/>
            <person name="Laird G."/>
            <person name="Lehoczky J."/>
            <person name="Liu X."/>
            <person name="Lokyitsang T."/>
            <person name="Loveland J."/>
            <person name="Lui A."/>
            <person name="Macdonald P."/>
            <person name="Major J.E."/>
            <person name="Matthews L."/>
            <person name="Mauceli E."/>
            <person name="McCarroll S.A."/>
            <person name="Mihalev A.H."/>
            <person name="Mudge J."/>
            <person name="Nguyen C."/>
            <person name="Nicol R."/>
            <person name="O'Leary S.B."/>
            <person name="Osoegawa K."/>
            <person name="Schwartz D.C."/>
            <person name="Shaw-Smith C."/>
            <person name="Stankiewicz P."/>
            <person name="Steward C."/>
            <person name="Swarbreck D."/>
            <person name="Venkataraman V."/>
            <person name="Whittaker C.A."/>
            <person name="Yang X."/>
            <person name="Zimmer A.R."/>
            <person name="Bradley A."/>
            <person name="Hubbard T."/>
            <person name="Birren B.W."/>
            <person name="Rogers J."/>
            <person name="Lander E.S."/>
            <person name="Nusbaum C."/>
        </authorList>
    </citation>
    <scope>NUCLEOTIDE SEQUENCE [LARGE SCALE GENOMIC DNA]</scope>
</reference>
<reference key="6">
    <citation type="journal article" date="2004" name="Genome Res.">
        <title>The status, quality, and expansion of the NIH full-length cDNA project: the Mammalian Gene Collection (MGC).</title>
        <authorList>
            <consortium name="The MGC Project Team"/>
        </authorList>
    </citation>
    <scope>NUCLEOTIDE SEQUENCE [LARGE SCALE MRNA] (ISOFORMS 2 AND 3)</scope>
    <source>
        <tissue>Cervix</tissue>
        <tissue>Colon</tissue>
    </source>
</reference>
<reference key="7">
    <citation type="journal article" date="2008" name="J. Proteome Res.">
        <title>Combining protein-based IMAC, peptide-based IMAC, and MudPIT for efficient phosphoproteomic analysis.</title>
        <authorList>
            <person name="Cantin G.T."/>
            <person name="Yi W."/>
            <person name="Lu B."/>
            <person name="Park S.K."/>
            <person name="Xu T."/>
            <person name="Lee J.-D."/>
            <person name="Yates J.R. III"/>
        </authorList>
    </citation>
    <scope>PHOSPHORYLATION [LARGE SCALE ANALYSIS] AT SER-544</scope>
    <scope>IDENTIFICATION BY MASS SPECTROMETRY [LARGE SCALE ANALYSIS]</scope>
    <source>
        <tissue>Cervix carcinoma</tissue>
    </source>
</reference>
<reference key="8">
    <citation type="journal article" date="2012" name="Am. J. Hum. Genet.">
        <title>PSORS2 is due to mutations in CARD14.</title>
        <authorList>
            <person name="Jordan C.T."/>
            <person name="Cao L."/>
            <person name="Roberson E.D."/>
            <person name="Pierson K.C."/>
            <person name="Yang C.F."/>
            <person name="Joyce C.E."/>
            <person name="Ryan C."/>
            <person name="Duan S."/>
            <person name="Helms C.A."/>
            <person name="Liu Y."/>
            <person name="Chen Y."/>
            <person name="McBride A.A."/>
            <person name="Hwu W.L."/>
            <person name="Wu J.Y."/>
            <person name="Chen Y.T."/>
            <person name="Menter A."/>
            <person name="Goldbach-Mansky R."/>
            <person name="Lowes M.A."/>
            <person name="Bowcock A.M."/>
        </authorList>
    </citation>
    <scope>TISSUE SPECIFICITY</scope>
    <scope>VARIANTS PSORS2 SER-117 AND ALA-138</scope>
    <scope>CHARACTERIZATION OF VARIANTS PSORS2 SER-117 AND ALA-138</scope>
</reference>
<reference key="9">
    <citation type="journal article" date="2016" name="Biochem. J.">
        <title>Psoriasis mutations disrupt CARD14 autoinhibition promoting BCL10-MALT1-dependent NF-kappaB activation.</title>
        <authorList>
            <person name="Howes A."/>
            <person name="O'Sullivan P.A."/>
            <person name="Breyer F."/>
            <person name="Ghose A."/>
            <person name="Cao L."/>
            <person name="Krappmann D."/>
            <person name="Bowcock A.M."/>
            <person name="Ley S.C."/>
        </authorList>
    </citation>
    <scope>FUNCTION</scope>
    <scope>SUBUNIT</scope>
    <scope>CHARACTERIZATION OF VARIANTS PSORS2 SER-117 AND ALA-138</scope>
</reference>
<reference key="10">
    <citation type="journal article" date="2016" name="EMBO Rep.">
        <title>The paracaspase MALT1 mediates CARD14-induced signaling in keratinocytes.</title>
        <authorList>
            <person name="Afonina I.S."/>
            <person name="Van Nuffel E."/>
            <person name="Baudelet G."/>
            <person name="Driege Y."/>
            <person name="Kreike M."/>
            <person name="Staal J."/>
            <person name="Beyaert R."/>
        </authorList>
    </citation>
    <scope>SUBUNIT</scope>
    <scope>FUNCTION</scope>
    <scope>CHARACTERIZATION OF VARIANTS PSORS2 SER-117; ALA-138 AND LYS-142</scope>
    <scope>CHARACTERIZATION OF VARIANT ASN-171</scope>
</reference>
<reference key="11">
    <citation type="journal article" date="2012" name="Am. J. Hum. Genet.">
        <title>Familial pityriasis rubra pilaris is caused by mutations in CARD14.</title>
        <authorList>
            <person name="Fuchs-Telem D."/>
            <person name="Sarig O."/>
            <person name="van Steensel M.A."/>
            <person name="Isakov O."/>
            <person name="Israeli S."/>
            <person name="Nousbeck J."/>
            <person name="Richard K."/>
            <person name="Winnepenninckx V."/>
            <person name="Vernooij M."/>
            <person name="Shomron N."/>
            <person name="Uitto J."/>
            <person name="Fleckman P."/>
            <person name="Richard G."/>
            <person name="Sprecher E."/>
        </authorList>
    </citation>
    <scope>VARIANTS PRP GLU-138 DEL AND PRO-156</scope>
</reference>
<reference key="12">
    <citation type="journal article" date="2012" name="Am. J. Hum. Genet.">
        <title>Rare and Common Variants in CARD14, Encoding an Epidermal Regulator of NF-kappaB, in Psoriasis.</title>
        <authorList>
            <person name="Jordan C.T."/>
            <person name="Cao L."/>
            <person name="Roberson E.D."/>
            <person name="Duan S."/>
            <person name="Helms C.A."/>
            <person name="Nair R.P."/>
            <person name="Duffin K.C."/>
            <person name="Stuart P.E."/>
            <person name="Goldgar D."/>
            <person name="Hayashi G."/>
            <person name="Olfson E.H."/>
            <person name="Feng B.J."/>
            <person name="Pullinger C.R."/>
            <person name="Kane J.P."/>
            <person name="Wise C.A."/>
            <person name="Goldbach-Mansky R."/>
            <person name="Lowes M.A."/>
            <person name="Peddle L."/>
            <person name="Chandran V."/>
            <person name="Liao W."/>
            <person name="Rahman P."/>
            <person name="Krueger G.G."/>
            <person name="Gladman D."/>
            <person name="Elder J.T."/>
            <person name="Menter A."/>
            <person name="Bowcock A.M."/>
        </authorList>
    </citation>
    <scope>VARIANTS CYS-38; GLN-62; ARG-150; ASN-171; HIS-176; HIS-179; LEU-191; ASN-200; GLY-285; ASN-593; TRP-682; SER-714 AND GLU-973</scope>
    <scope>VARIANTS PSORS2 SER-117; ALA-138; LYS-142 AND GLY-142</scope>
    <scope>CHARACTERIZATION OF VARIANTS PSORS2 LYS-142 AND GLY-142</scope>
</reference>
<reference key="13">
    <citation type="journal article" date="2016" name="Br. J. Dermatol.">
        <title>CARD14 alterations in Tunisian patients with psoriasis and further characterization in European cohorts.</title>
        <authorList>
            <person name="Ammar M."/>
            <person name="Jordan C.T."/>
            <person name="Cao L."/>
            <person name="Lim E."/>
            <person name="Bouchlaka Souissi C."/>
            <person name="Jrad A."/>
            <person name="Omrane I."/>
            <person name="Kouidhi S."/>
            <person name="Zaraa I."/>
            <person name="Anbunathan H."/>
            <person name="Mokni M."/>
            <person name="Doss N."/>
            <person name="Guttman-Yassky E."/>
            <person name="El Gaaied A.B."/>
            <person name="Menter A."/>
            <person name="Bowcock A.M."/>
        </authorList>
    </citation>
    <scope>VARIANTS PSORS2 TRP-69; SER-117; GLN-151; TRP-151; LYS-197; PRO-209; THR-216; ALA-420; LEU-602 AND GLY-639</scope>
    <scope>CHARACTERIZATION OF VARIANTS PSORS2 TRP-69; SER-117; ARG-150; GLN-151; TRP-151; LYS-197; PRO-209; THR-216; ALA-420; LEU-602 AND GLY-639</scope>
    <scope>VARIANTS GLN-62; ARG-150; ASN-200; THR-216; CYS-218; VAL-338; PRO-350 AND PRO-357</scope>
    <scope>CHARACTERIZATION OF VARIANTS CYS-218 AND VAL-338</scope>
</reference>
<reference key="14">
    <citation type="journal article" date="2017" name="JAMA Dermatol.">
        <title>Pityriasis rubra pilaris type V as an autoinflammatory disease by CARD14 mutations.</title>
        <authorList>
            <person name="Takeichi T."/>
            <person name="Sugiura K."/>
            <person name="Nomura T."/>
            <person name="Sakamoto T."/>
            <person name="Ogawa Y."/>
            <person name="Oiso N."/>
            <person name="Futei Y."/>
            <person name="Fujisaki A."/>
            <person name="Koizumi A."/>
            <person name="Aoyama Y."/>
            <person name="Nakajima K."/>
            <person name="Hatano Y."/>
            <person name="Hayashi K."/>
            <person name="Ishida-Yamamoto A."/>
            <person name="Fujiwara S."/>
            <person name="Sano S."/>
            <person name="Iwatsuki K."/>
            <person name="Kawada A."/>
            <person name="Suga Y."/>
            <person name="Shimizu H."/>
            <person name="McGrath J.A."/>
            <person name="Akiyama M."/>
        </authorList>
    </citation>
    <scope>VARIANTS PRP SER-117; SER-127 AND LEU-136</scope>
    <scope>VARIANT HIS-176</scope>
</reference>
<name>CAR14_HUMAN</name>
<protein>
    <recommendedName>
        <fullName>Caspase recruitment domain-containing protein 14</fullName>
    </recommendedName>
    <alternativeName>
        <fullName>CARD-containing MAGUK protein 2</fullName>
        <shortName>Carma 2</shortName>
    </alternativeName>
</protein>
<feature type="chain" id="PRO_0000144088" description="Caspase recruitment domain-containing protein 14">
    <location>
        <begin position="1"/>
        <end position="1004"/>
    </location>
</feature>
<feature type="domain" description="CARD" evidence="2">
    <location>
        <begin position="15"/>
        <end position="107"/>
    </location>
</feature>
<feature type="domain" description="PDZ" evidence="4">
    <location>
        <begin position="568"/>
        <end position="658"/>
    </location>
</feature>
<feature type="domain" description="Guanylate kinase-like" evidence="3">
    <location>
        <begin position="807"/>
        <end position="990"/>
    </location>
</feature>
<feature type="region of interest" description="Maintains the protein in an inactive state" evidence="12">
    <location>
        <begin position="409"/>
        <end position="568"/>
    </location>
</feature>
<feature type="coiled-coil region" evidence="1">
    <location>
        <begin position="128"/>
        <end position="409"/>
    </location>
</feature>
<feature type="modified residue" description="Phosphoserine" evidence="19">
    <location>
        <position position="544"/>
    </location>
</feature>
<feature type="splice variant" id="VSP_047400" description="In isoform 3." evidence="15 16">
    <location>
        <begin position="1"/>
        <end position="237"/>
    </location>
</feature>
<feature type="splice variant" id="VSP_047401" description="In isoform 3." evidence="15 16">
    <original>DYEASEPLFKAVLEDTTLEEAVGLLRRVDGFCCLSVKVNTDGYKRLLQDLEAK</original>
    <variation>SRARPLLSPGLLMGTVAAGGVTQADFTSPRRCRSTLGWASALSWADVKRSAHL</variation>
    <location>
        <begin position="619"/>
        <end position="671"/>
    </location>
</feature>
<feature type="splice variant" id="VSP_047402" description="In isoform 3." evidence="15 16">
    <location>
        <begin position="672"/>
        <end position="1004"/>
    </location>
</feature>
<feature type="splice variant" id="VSP_047403" description="In isoform 2." evidence="15 16">
    <location>
        <begin position="741"/>
        <end position="1004"/>
    </location>
</feature>
<feature type="sequence variant" id="VAR_068222" description="In dbSNP:rs281875217." evidence="9">
    <original>R</original>
    <variation>C</variation>
    <location>
        <position position="38"/>
    </location>
</feature>
<feature type="sequence variant" id="VAR_068223" description="In dbSNP:rs115582620." evidence="9 11">
    <original>R</original>
    <variation>Q</variation>
    <location>
        <position position="62"/>
    </location>
</feature>
<feature type="sequence variant" id="VAR_078583" description="In PSORS2; reduces NF-kappa-B activation; dbSNP:rs375624435." evidence="11">
    <original>R</original>
    <variation>W</variation>
    <location>
        <position position="69"/>
    </location>
</feature>
<feature type="sequence variant" id="VAR_068224" description="In PSORS2 and PRP; may result in altered splicing of exon 3; increases NF-kappaB transcription factor activity; enhances CBCL10-MALT1-CARD14 complex formation; enhances MALT1 protease activity; dbSNP:rs281875215." evidence="8 9 11 12 13 14">
    <original>G</original>
    <variation>S</variation>
    <location>
        <position position="117"/>
    </location>
</feature>
<feature type="sequence variant" id="VAR_078584" description="In PRP." evidence="14">
    <original>C</original>
    <variation>S</variation>
    <location>
        <position position="127"/>
    </location>
</feature>
<feature type="sequence variant" id="VAR_078585" description="In PRP." evidence="14">
    <original>Q</original>
    <variation>L</variation>
    <location>
        <position position="136"/>
    </location>
</feature>
<feature type="sequence variant" id="VAR_068225" description="In PSORS2; increases NF-kappaB transcription factor activity; enhances CBCL10-MALT1-CARD14 complex formation; enhances MALT1 protease activity; dbSNP:rs281875214." evidence="8 9 12 13">
    <original>E</original>
    <variation>A</variation>
    <location>
        <position position="138"/>
    </location>
</feature>
<feature type="sequence variant" id="VAR_068819" description="In PRP." evidence="10">
    <location>
        <position position="138"/>
    </location>
</feature>
<feature type="sequence variant" id="VAR_068226" description="In PSORS2; increases NF-kappaB transcription factor activity; dbSNP:rs281875213." evidence="9">
    <original>E</original>
    <variation>G</variation>
    <location>
        <position position="142"/>
    </location>
</feature>
<feature type="sequence variant" id="VAR_068227" description="In PSORS2; increases NF-kappaB transcription factor activity; enhances MALT1 protease activity; dbSNP:rs281875212." evidence="9 13">
    <original>E</original>
    <variation>K</variation>
    <location>
        <position position="142"/>
    </location>
</feature>
<feature type="sequence variant" id="VAR_068228" description="In PSORS2; increases NF-kappaB transcription factor activity; dbSNP:rs146214639." evidence="9 11">
    <original>L</original>
    <variation>R</variation>
    <location>
        <position position="150"/>
    </location>
</feature>
<feature type="sequence variant" id="VAR_078586" description="In PSORS2; uncertain significance; decreases NF-kappaB transcription factor activity; dbSNP:rs200731780." evidence="11">
    <original>R</original>
    <variation>Q</variation>
    <location>
        <position position="151"/>
    </location>
</feature>
<feature type="sequence variant" id="VAR_078587" description="In PSORS2; uncertain significance; decreases NF-kappaB transcription factor activity; dbSNP:rs777305616." evidence="11">
    <original>R</original>
    <variation>W</variation>
    <location>
        <position position="151"/>
    </location>
</feature>
<feature type="sequence variant" id="VAR_068820" description="In PRP; dbSNP:rs387907240." evidence="10">
    <original>L</original>
    <variation>P</variation>
    <location>
        <position position="156"/>
    </location>
</feature>
<feature type="sequence variant" id="VAR_068229" description="Probable risk factor for PSORS2; does not change MALT1 protease activity; dbSNP:rs281875216." evidence="9 13">
    <original>H</original>
    <variation>N</variation>
    <location>
        <position position="171"/>
    </location>
</feature>
<feature type="sequence variant" id="VAR_068230" description="In dbSNP:rs144475004." evidence="9 14">
    <original>D</original>
    <variation>H</variation>
    <location>
        <position position="176"/>
    </location>
</feature>
<feature type="sequence variant" id="VAR_068231" description="In dbSNP:rs199517469." evidence="9">
    <original>R</original>
    <variation>H</variation>
    <location>
        <position position="179"/>
    </location>
</feature>
<feature type="sequence variant" id="VAR_068232" description="In dbSNP:rs281875218." evidence="9">
    <original>V</original>
    <variation>L</variation>
    <location>
        <position position="191"/>
    </location>
</feature>
<feature type="sequence variant" id="VAR_078588" description="In PSORS2; increases NF-kappaB transcription factor activity; dbSNP:rs200790561." evidence="11">
    <original>E</original>
    <variation>K</variation>
    <location>
        <position position="197"/>
    </location>
</feature>
<feature type="sequence variant" id="VAR_068233" description="In dbSNP:rs114688446." evidence="9 11">
    <original>S</original>
    <variation>N</variation>
    <location>
        <position position="200"/>
    </location>
</feature>
<feature type="sequence variant" id="VAR_078589" description="In PSORS2; uncertain significance; no effect on NF-kappaB transcription factor activity." evidence="11">
    <original>L</original>
    <variation>P</variation>
    <location>
        <position position="209"/>
    </location>
</feature>
<feature type="sequence variant" id="VAR_078590" description="In PSORS2; uncertain significance; decreases NF-kappaB transcription factor activity; dbSNP:rs574982768." evidence="11">
    <original>A</original>
    <variation>T</variation>
    <location>
        <position position="216"/>
    </location>
</feature>
<feature type="sequence variant" id="VAR_078591" description="Decreases NF-kappaB transcription factor activity; dbSNP:rs747854314." evidence="11">
    <original>R</original>
    <variation>C</variation>
    <location>
        <position position="218"/>
    </location>
</feature>
<feature type="sequence variant" id="VAR_068234" description="Risk factor for PSORS2; dbSNP:rs281875219." evidence="9">
    <original>D</original>
    <variation>G</variation>
    <location>
        <position position="285"/>
    </location>
</feature>
<feature type="sequence variant" id="VAR_078592" description="Does not change NF-kappaB transcription factor activity; dbSNP:rs200132496." evidence="11">
    <original>M</original>
    <variation>V</variation>
    <location>
        <position position="338"/>
    </location>
</feature>
<feature type="sequence variant" id="VAR_078593" description="In dbSNP:rs1412261979." evidence="11">
    <original>L</original>
    <variation>P</variation>
    <location>
        <position position="350"/>
    </location>
</feature>
<feature type="sequence variant" id="VAR_078594" evidence="11">
    <original>L</original>
    <variation>P</variation>
    <location>
        <position position="357"/>
    </location>
</feature>
<feature type="sequence variant" id="VAR_078595" description="In PSORS2; uncertain significance; decreases NF-kappaB transcription factor activity; dbSNP:rs762364495." evidence="11">
    <original>T</original>
    <variation>A</variation>
    <location>
        <position position="420"/>
    </location>
</feature>
<feature type="sequence variant" id="VAR_024401" description="In dbSNP:rs2066964.">
    <original>R</original>
    <variation>S</variation>
    <location>
        <position position="547"/>
    </location>
</feature>
<feature type="sequence variant" id="VAR_048608" description="In dbSNP:rs34367357.">
    <original>V</original>
    <variation>I</variation>
    <location>
        <position position="585"/>
    </location>
</feature>
<feature type="sequence variant" id="VAR_068235" description="In dbSNP:rs281875220." evidence="9">
    <original>I</original>
    <variation>N</variation>
    <location>
        <position position="593"/>
    </location>
</feature>
<feature type="sequence variant" id="VAR_078596" description="In PSORS2; uncertain significance; does not change NF-kappaB transcription factor activity; dbSNP:rs201285077." evidence="11">
    <original>S</original>
    <variation>L</variation>
    <location>
        <position position="602"/>
    </location>
</feature>
<feature type="sequence variant" id="VAR_078597" description="In PSORS2; uncertain significance; does not change NF-kappaB transcription factor activity." evidence="11">
    <original>A</original>
    <variation>G</variation>
    <location>
        <position position="639"/>
    </location>
</feature>
<feature type="sequence variant" id="VAR_068236" description="In dbSNP:rs117918077." evidence="9">
    <original>R</original>
    <variation>W</variation>
    <location>
        <position position="682"/>
    </location>
</feature>
<feature type="sequence variant" id="VAR_068237" description="In dbSNP:rs151150961." evidence="9">
    <original>G</original>
    <variation>S</variation>
    <location>
        <position position="714"/>
    </location>
</feature>
<feature type="sequence variant" id="VAR_059196" description="In dbSNP:rs11652075." evidence="5 6">
    <original>R</original>
    <variation>W</variation>
    <location>
        <position position="820"/>
    </location>
</feature>
<feature type="sequence variant" id="VAR_022043" description="In dbSNP:rs2289541.">
    <original>R</original>
    <variation>H</variation>
    <location>
        <position position="883"/>
    </location>
</feature>
<feature type="sequence variant" id="VAR_061080" description="In dbSNP:rs34850974.">
    <original>R</original>
    <variation>Q</variation>
    <location>
        <position position="962"/>
    </location>
</feature>
<feature type="sequence variant" id="VAR_068238" description="In dbSNP:rs144285237." evidence="9">
    <original>D</original>
    <variation>E</variation>
    <location>
        <position position="973"/>
    </location>
</feature>
<organism>
    <name type="scientific">Homo sapiens</name>
    <name type="common">Human</name>
    <dbReference type="NCBI Taxonomy" id="9606"/>
    <lineage>
        <taxon>Eukaryota</taxon>
        <taxon>Metazoa</taxon>
        <taxon>Chordata</taxon>
        <taxon>Craniata</taxon>
        <taxon>Vertebrata</taxon>
        <taxon>Euteleostomi</taxon>
        <taxon>Mammalia</taxon>
        <taxon>Eutheria</taxon>
        <taxon>Euarchontoglires</taxon>
        <taxon>Primates</taxon>
        <taxon>Haplorrhini</taxon>
        <taxon>Catarrhini</taxon>
        <taxon>Hominidae</taxon>
        <taxon>Homo</taxon>
    </lineage>
</organism>
<accession>Q9BXL6</accession>
<accession>B8QQJ3</accession>
<accession>Q9BVB5</accession>
<evidence type="ECO:0000255" key="1"/>
<evidence type="ECO:0000255" key="2">
    <source>
        <dbReference type="PROSITE-ProRule" id="PRU00046"/>
    </source>
</evidence>
<evidence type="ECO:0000255" key="3">
    <source>
        <dbReference type="PROSITE-ProRule" id="PRU00100"/>
    </source>
</evidence>
<evidence type="ECO:0000255" key="4">
    <source>
        <dbReference type="PROSITE-ProRule" id="PRU00143"/>
    </source>
</evidence>
<evidence type="ECO:0000269" key="5">
    <source>
    </source>
</evidence>
<evidence type="ECO:0000269" key="6">
    <source>
    </source>
</evidence>
<evidence type="ECO:0000269" key="7">
    <source>
    </source>
</evidence>
<evidence type="ECO:0000269" key="8">
    <source>
    </source>
</evidence>
<evidence type="ECO:0000269" key="9">
    <source>
    </source>
</evidence>
<evidence type="ECO:0000269" key="10">
    <source>
    </source>
</evidence>
<evidence type="ECO:0000269" key="11">
    <source>
    </source>
</evidence>
<evidence type="ECO:0000269" key="12">
    <source>
    </source>
</evidence>
<evidence type="ECO:0000269" key="13">
    <source>
    </source>
</evidence>
<evidence type="ECO:0000269" key="14">
    <source>
    </source>
</evidence>
<evidence type="ECO:0000303" key="15">
    <source>
    </source>
</evidence>
<evidence type="ECO:0000303" key="16">
    <source>
    </source>
</evidence>
<evidence type="ECO:0000303" key="17">
    <source>
    </source>
</evidence>
<evidence type="ECO:0000305" key="18"/>
<evidence type="ECO:0007744" key="19">
    <source>
    </source>
</evidence>
<gene>
    <name type="primary">CARD14</name>
    <name type="synonym">CARMA2</name>
</gene>
<sequence length="1004" mass="113270">MGELCRRDSALTALDEETLWEMMESHRHRIVRCICPSRLTPYLRQAKVLCQLDEEEVLHSPRLTNSAMRAGHLLDLLKTRGKNGAIAFLESLKFHNPDVYTLVTGLQPDVDFSNFSGLMETSKLTECLAGAIGSLQEELNQEKGQKEVLLRRCQQLQEHLGLAETRAEGLHQLEADHSRMKREVSAHFHEVLRLKDEMLSLSLHYSNALQEKELAASRCRSLQEELYLLKQELQRANMVSSCELELQEQSLRTASDQESGDEELNRLKEENEKLRSLTFSLAEKDILEQSLDEARGSRQELVERIHSLRERAVAAERQREQYWEEKEQTLLQFQKSKMACQLYREKVNALQAQVCELQKERDQAYSARDSAQREISQSLVEKDSLRRQVFELTDQVCELRTQLRQLQAEPPGVLKQEARTREPCPREKQRLVRMHAICPRDDSDCSLVSSTESQLLSDLSATSSRELVDSFRSSSPAPPSQQSLYKRVAEDFGEEPWSFSSCLEIPEGDPGALPGAKAGDPHLDYELLDTADLPQLESSLQPVSPGRLDVSESGVLMRRRPARRILSQVTMLAFQGDALLEQISVIGGNLTGIFIHRVTPGSAADQMALRPGTQIVMVDYEASEPLFKAVLEDTTLEEAVGLLRRVDGFCCLSVKVNTDGYKRLLQDLEAKVATSGDSFYIRVNLAMEGRAKGELQVHCNEVLHVTDTMFQGCGCWHAHRVNSYTMKDTAAHGTIPNYSRAQQQLIALIQDMTQQCTVTRKPSSGGPQKLVRIVSMDKAKASPLRLSFDRGQLDPSRMEGSSTCFWAESCLTLVPYTLVRPHRPARPRPVLLVPRAVGKILSEKLCLLQGFKKCLAEYLSQEEYEAWSQRGDIIQEGEVSGGRCWVTRHAVESLMEKNTHALLDVQLDSVCTLHRMDIFPIVIHVSVNEKMAKKLKKGLQRLGTSEEQLLEAARQEEGDLDRAPCLYSSLAPDGWSDLDGLLSCVRQAIADEQKKVVWTEQSPR</sequence>
<dbReference type="EMBL" id="AF322642">
    <property type="protein sequence ID" value="AAG53403.1"/>
    <property type="molecule type" value="mRNA"/>
</dbReference>
<dbReference type="EMBL" id="AY032927">
    <property type="protein sequence ID" value="AAK54453.1"/>
    <property type="molecule type" value="mRNA"/>
</dbReference>
<dbReference type="EMBL" id="EU652409">
    <property type="protein sequence ID" value="ACF49506.1"/>
    <property type="molecule type" value="mRNA"/>
</dbReference>
<dbReference type="EMBL" id="AC087741">
    <property type="status" value="NOT_ANNOTATED_CDS"/>
    <property type="molecule type" value="Genomic_DNA"/>
</dbReference>
<dbReference type="EMBL" id="BC018142">
    <property type="protein sequence ID" value="AAH18142.1"/>
    <property type="molecule type" value="mRNA"/>
</dbReference>
<dbReference type="EMBL" id="BC001326">
    <property type="protein sequence ID" value="AAH01326.1"/>
    <property type="molecule type" value="mRNA"/>
</dbReference>
<dbReference type="CCDS" id="CCDS11768.1">
    <molecule id="Q9BXL6-1"/>
</dbReference>
<dbReference type="CCDS" id="CCDS58605.1">
    <molecule id="Q9BXL6-2"/>
</dbReference>
<dbReference type="RefSeq" id="NP_001244899.1">
    <molecule id="Q9BXL6-2"/>
    <property type="nucleotide sequence ID" value="NM_001257970.1"/>
</dbReference>
<dbReference type="RefSeq" id="NP_001353314.1">
    <molecule id="Q9BXL6-1"/>
    <property type="nucleotide sequence ID" value="NM_001366385.1"/>
</dbReference>
<dbReference type="RefSeq" id="NP_077015.2">
    <molecule id="Q9BXL6-1"/>
    <property type="nucleotide sequence ID" value="NM_024110.4"/>
</dbReference>
<dbReference type="RefSeq" id="NP_438170.1">
    <molecule id="Q9BXL6-3"/>
    <property type="nucleotide sequence ID" value="NM_052819.3"/>
</dbReference>
<dbReference type="RefSeq" id="XP_011523514.1">
    <property type="nucleotide sequence ID" value="XM_011525212.1"/>
</dbReference>
<dbReference type="RefSeq" id="XP_011523515.1">
    <molecule id="Q9BXL6-1"/>
    <property type="nucleotide sequence ID" value="XM_011525213.2"/>
</dbReference>
<dbReference type="RefSeq" id="XP_011523517.1">
    <property type="nucleotide sequence ID" value="XM_011525215.1"/>
</dbReference>
<dbReference type="RefSeq" id="XP_011523518.1">
    <molecule id="Q9BXL6-1"/>
    <property type="nucleotide sequence ID" value="XM_011525216.2"/>
</dbReference>
<dbReference type="RefSeq" id="XP_011523519.1">
    <property type="nucleotide sequence ID" value="XM_011525217.1"/>
</dbReference>
<dbReference type="RefSeq" id="XP_011523520.1">
    <molecule id="Q9BXL6-1"/>
    <property type="nucleotide sequence ID" value="XM_011525218.2"/>
</dbReference>
<dbReference type="RefSeq" id="XP_047292669.1">
    <molecule id="Q9BXL6-1"/>
    <property type="nucleotide sequence ID" value="XM_047436713.1"/>
</dbReference>
<dbReference type="RefSeq" id="XP_047292670.1">
    <molecule id="Q9BXL6-1"/>
    <property type="nucleotide sequence ID" value="XM_047436714.1"/>
</dbReference>
<dbReference type="RefSeq" id="XP_047292671.1">
    <molecule id="Q9BXL6-1"/>
    <property type="nucleotide sequence ID" value="XM_047436715.1"/>
</dbReference>
<dbReference type="RefSeq" id="XP_047292672.1">
    <molecule id="Q9BXL6-1"/>
    <property type="nucleotide sequence ID" value="XM_047436716.1"/>
</dbReference>
<dbReference type="RefSeq" id="XP_047292673.1">
    <molecule id="Q9BXL6-1"/>
    <property type="nucleotide sequence ID" value="XM_047436717.1"/>
</dbReference>
<dbReference type="RefSeq" id="XP_047292677.1">
    <molecule id="Q9BXL6-2"/>
    <property type="nucleotide sequence ID" value="XM_047436721.1"/>
</dbReference>
<dbReference type="RefSeq" id="XP_054189175.1">
    <molecule id="Q9BXL6-1"/>
    <property type="nucleotide sequence ID" value="XM_054333200.1"/>
</dbReference>
<dbReference type="RefSeq" id="XP_054189176.1">
    <molecule id="Q9BXL6-1"/>
    <property type="nucleotide sequence ID" value="XM_054333201.1"/>
</dbReference>
<dbReference type="RefSeq" id="XP_054189177.1">
    <molecule id="Q9BXL6-1"/>
    <property type="nucleotide sequence ID" value="XM_054333202.1"/>
</dbReference>
<dbReference type="RefSeq" id="XP_054189178.1">
    <molecule id="Q9BXL6-1"/>
    <property type="nucleotide sequence ID" value="XM_054333203.1"/>
</dbReference>
<dbReference type="RefSeq" id="XP_054189179.1">
    <molecule id="Q9BXL6-1"/>
    <property type="nucleotide sequence ID" value="XM_054333204.1"/>
</dbReference>
<dbReference type="RefSeq" id="XP_054189180.1">
    <molecule id="Q9BXL6-1"/>
    <property type="nucleotide sequence ID" value="XM_054333205.1"/>
</dbReference>
<dbReference type="RefSeq" id="XP_054189181.1">
    <molecule id="Q9BXL6-1"/>
    <property type="nucleotide sequence ID" value="XM_054333206.1"/>
</dbReference>
<dbReference type="RefSeq" id="XP_054189183.1">
    <molecule id="Q9BXL6-1"/>
    <property type="nucleotide sequence ID" value="XM_054333208.1"/>
</dbReference>
<dbReference type="RefSeq" id="XP_054189184.1">
    <molecule id="Q9BXL6-1"/>
    <property type="nucleotide sequence ID" value="XM_054333209.1"/>
</dbReference>
<dbReference type="RefSeq" id="XP_054189186.1">
    <molecule id="Q9BXL6-2"/>
    <property type="nucleotide sequence ID" value="XM_054333211.1"/>
</dbReference>
<dbReference type="SMR" id="Q9BXL6"/>
<dbReference type="BioGRID" id="122540">
    <property type="interactions" value="14"/>
</dbReference>
<dbReference type="ComplexPortal" id="CPX-8906">
    <property type="entry name" value="CARD-BCL10-MALT1 complex, CARD14 variant"/>
</dbReference>
<dbReference type="CORUM" id="Q9BXL6"/>
<dbReference type="FunCoup" id="Q9BXL6">
    <property type="interactions" value="511"/>
</dbReference>
<dbReference type="IntAct" id="Q9BXL6">
    <property type="interactions" value="9"/>
</dbReference>
<dbReference type="STRING" id="9606.ENSP00000498071"/>
<dbReference type="GlyGen" id="Q9BXL6">
    <property type="glycosylation" value="2 sites, 1 O-linked glycan (1 site)"/>
</dbReference>
<dbReference type="iPTMnet" id="Q9BXL6"/>
<dbReference type="PhosphoSitePlus" id="Q9BXL6"/>
<dbReference type="BioMuta" id="CARD14"/>
<dbReference type="DMDM" id="296434421"/>
<dbReference type="jPOST" id="Q9BXL6"/>
<dbReference type="MassIVE" id="Q9BXL6"/>
<dbReference type="PaxDb" id="9606-ENSP00000458715"/>
<dbReference type="PeptideAtlas" id="Q9BXL6"/>
<dbReference type="ProteomicsDB" id="7285"/>
<dbReference type="ProteomicsDB" id="79449">
    <molecule id="Q9BXL6-1"/>
</dbReference>
<dbReference type="Antibodypedia" id="19763">
    <property type="antibodies" value="206 antibodies from 32 providers"/>
</dbReference>
<dbReference type="DNASU" id="79092"/>
<dbReference type="Ensembl" id="ENST00000344227.6">
    <molecule id="Q9BXL6-1"/>
    <property type="protein sequence ID" value="ENSP00000344549.2"/>
    <property type="gene ID" value="ENSG00000141527.19"/>
</dbReference>
<dbReference type="Ensembl" id="ENST00000570421.5">
    <molecule id="Q9BXL6-2"/>
    <property type="protein sequence ID" value="ENSP00000461806.1"/>
    <property type="gene ID" value="ENSG00000141527.19"/>
</dbReference>
<dbReference type="Ensembl" id="ENST00000571427.2">
    <molecule id="Q9BXL6-1"/>
    <property type="protein sequence ID" value="ENSP00000516501.1"/>
    <property type="gene ID" value="ENSG00000141527.19"/>
</dbReference>
<dbReference type="Ensembl" id="ENST00000573882.5">
    <molecule id="Q9BXL6-1"/>
    <property type="protein sequence ID" value="ENSP00000458715.1"/>
    <property type="gene ID" value="ENSG00000141527.19"/>
</dbReference>
<dbReference type="Ensembl" id="ENST00000648509.2">
    <molecule id="Q9BXL6-1"/>
    <property type="protein sequence ID" value="ENSP00000498071.1"/>
    <property type="gene ID" value="ENSG00000141527.19"/>
</dbReference>
<dbReference type="GeneID" id="79092"/>
<dbReference type="KEGG" id="hsa:79092"/>
<dbReference type="MANE-Select" id="ENST00000648509.2">
    <property type="protein sequence ID" value="ENSP00000498071.1"/>
    <property type="RefSeq nucleotide sequence ID" value="NM_001366385.1"/>
    <property type="RefSeq protein sequence ID" value="NP_001353314.1"/>
</dbReference>
<dbReference type="UCSC" id="uc002jxw.3">
    <molecule id="Q9BXL6-1"/>
    <property type="organism name" value="human"/>
</dbReference>
<dbReference type="AGR" id="HGNC:16446"/>
<dbReference type="CTD" id="79092"/>
<dbReference type="DisGeNET" id="79092"/>
<dbReference type="GeneCards" id="CARD14"/>
<dbReference type="HGNC" id="HGNC:16446">
    <property type="gene designation" value="CARD14"/>
</dbReference>
<dbReference type="HPA" id="ENSG00000141527">
    <property type="expression patterns" value="Tissue enhanced (esophagus, skin, vagina)"/>
</dbReference>
<dbReference type="MalaCards" id="CARD14"/>
<dbReference type="MIM" id="173200">
    <property type="type" value="phenotype"/>
</dbReference>
<dbReference type="MIM" id="602723">
    <property type="type" value="phenotype"/>
</dbReference>
<dbReference type="MIM" id="607211">
    <property type="type" value="gene"/>
</dbReference>
<dbReference type="neXtProt" id="NX_Q9BXL6"/>
<dbReference type="OpenTargets" id="ENSG00000141527"/>
<dbReference type="Orphanet" id="2897">
    <property type="disease" value="Pityriasis rubra pilaris"/>
</dbReference>
<dbReference type="PharmGKB" id="PA134959119"/>
<dbReference type="VEuPathDB" id="HostDB:ENSG00000141527"/>
<dbReference type="eggNOG" id="KOG0708">
    <property type="taxonomic scope" value="Eukaryota"/>
</dbReference>
<dbReference type="GeneTree" id="ENSGT00940000160777"/>
<dbReference type="HOGENOM" id="CLU_009760_0_0_1"/>
<dbReference type="InParanoid" id="Q9BXL6"/>
<dbReference type="OMA" id="VVWTEQN"/>
<dbReference type="OrthoDB" id="8795751at2759"/>
<dbReference type="PAN-GO" id="Q9BXL6">
    <property type="GO annotations" value="2 GO annotations based on evolutionary models"/>
</dbReference>
<dbReference type="PhylomeDB" id="Q9BXL6"/>
<dbReference type="TreeFam" id="TF315606"/>
<dbReference type="PathwayCommons" id="Q9BXL6"/>
<dbReference type="SignaLink" id="Q9BXL6"/>
<dbReference type="BioGRID-ORCS" id="79092">
    <property type="hits" value="31 hits in 1145 CRISPR screens"/>
</dbReference>
<dbReference type="ChiTaRS" id="CARD14">
    <property type="organism name" value="human"/>
</dbReference>
<dbReference type="GeneWiki" id="CARD14"/>
<dbReference type="GenomeRNAi" id="79092"/>
<dbReference type="Pharos" id="Q9BXL6">
    <property type="development level" value="Tbio"/>
</dbReference>
<dbReference type="PRO" id="PR:Q9BXL6"/>
<dbReference type="Proteomes" id="UP000005640">
    <property type="component" value="Chromosome 17"/>
</dbReference>
<dbReference type="RNAct" id="Q9BXL6">
    <property type="molecule type" value="protein"/>
</dbReference>
<dbReference type="Bgee" id="ENSG00000141527">
    <property type="expression patterns" value="Expressed in lower esophagus mucosa and 133 other cell types or tissues"/>
</dbReference>
<dbReference type="ExpressionAtlas" id="Q9BXL6">
    <property type="expression patterns" value="baseline and differential"/>
</dbReference>
<dbReference type="GO" id="GO:0016235">
    <property type="term" value="C:aggresome"/>
    <property type="evidence" value="ECO:0000314"/>
    <property type="project" value="HPA"/>
</dbReference>
<dbReference type="GO" id="GO:0005737">
    <property type="term" value="C:cytoplasm"/>
    <property type="evidence" value="ECO:0000314"/>
    <property type="project" value="UniProtKB"/>
</dbReference>
<dbReference type="GO" id="GO:0005829">
    <property type="term" value="C:cytosol"/>
    <property type="evidence" value="ECO:0000314"/>
    <property type="project" value="HPA"/>
</dbReference>
<dbReference type="GO" id="GO:0005886">
    <property type="term" value="C:plasma membrane"/>
    <property type="evidence" value="ECO:0000303"/>
    <property type="project" value="UniProtKB"/>
</dbReference>
<dbReference type="GO" id="GO:0050700">
    <property type="term" value="F:CARD domain binding"/>
    <property type="evidence" value="ECO:0000353"/>
    <property type="project" value="UniProtKB"/>
</dbReference>
<dbReference type="GO" id="GO:0007250">
    <property type="term" value="P:activation of NF-kappaB-inducing kinase activity"/>
    <property type="evidence" value="ECO:0000303"/>
    <property type="project" value="UniProtKB"/>
</dbReference>
<dbReference type="GO" id="GO:0006915">
    <property type="term" value="P:apoptotic process"/>
    <property type="evidence" value="ECO:0007669"/>
    <property type="project" value="UniProtKB-KW"/>
</dbReference>
<dbReference type="GO" id="GO:0043066">
    <property type="term" value="P:negative regulation of apoptotic process"/>
    <property type="evidence" value="ECO:0000315"/>
    <property type="project" value="UniProtKB"/>
</dbReference>
<dbReference type="GO" id="GO:0043123">
    <property type="term" value="P:positive regulation of canonical NF-kappaB signal transduction"/>
    <property type="evidence" value="ECO:0000318"/>
    <property type="project" value="GO_Central"/>
</dbReference>
<dbReference type="GO" id="GO:0051092">
    <property type="term" value="P:positive regulation of NF-kappaB transcription factor activity"/>
    <property type="evidence" value="ECO:0000315"/>
    <property type="project" value="UniProtKB"/>
</dbReference>
<dbReference type="GO" id="GO:0001934">
    <property type="term" value="P:positive regulation of protein phosphorylation"/>
    <property type="evidence" value="ECO:0000314"/>
    <property type="project" value="UniProtKB"/>
</dbReference>
<dbReference type="GO" id="GO:0050776">
    <property type="term" value="P:regulation of immune response"/>
    <property type="evidence" value="ECO:0000318"/>
    <property type="project" value="GO_Central"/>
</dbReference>
<dbReference type="GO" id="GO:0033209">
    <property type="term" value="P:tumor necrosis factor-mediated signaling pathway"/>
    <property type="evidence" value="ECO:0000315"/>
    <property type="project" value="UniProtKB"/>
</dbReference>
<dbReference type="CDD" id="cd08806">
    <property type="entry name" value="CARD_CARD14_CARMA2"/>
    <property type="match status" value="1"/>
</dbReference>
<dbReference type="CDD" id="cd06736">
    <property type="entry name" value="PDZ_CARD11_CARD14-like"/>
    <property type="match status" value="1"/>
</dbReference>
<dbReference type="FunFam" id="2.30.42.10:FF:000172">
    <property type="entry name" value="Caspase recruitment domain family member 14"/>
    <property type="match status" value="1"/>
</dbReference>
<dbReference type="FunFam" id="3.40.50.300:FF:001294">
    <property type="entry name" value="Caspase recruitment domain family member 14"/>
    <property type="match status" value="1"/>
</dbReference>
<dbReference type="FunFam" id="1.10.533.10:FF:000003">
    <property type="entry name" value="Caspase recruitment domain family, member 11"/>
    <property type="match status" value="1"/>
</dbReference>
<dbReference type="FunFam" id="2.30.30.40:FF:000223">
    <property type="entry name" value="Caspase recruitment domain family, member 14"/>
    <property type="match status" value="1"/>
</dbReference>
<dbReference type="Gene3D" id="2.30.42.10">
    <property type="match status" value="1"/>
</dbReference>
<dbReference type="Gene3D" id="1.10.533.10">
    <property type="entry name" value="Death Domain, Fas"/>
    <property type="match status" value="1"/>
</dbReference>
<dbReference type="Gene3D" id="3.40.50.300">
    <property type="entry name" value="P-loop containing nucleotide triphosphate hydrolases"/>
    <property type="match status" value="1"/>
</dbReference>
<dbReference type="Gene3D" id="2.30.30.40">
    <property type="entry name" value="SH3 Domains"/>
    <property type="match status" value="1"/>
</dbReference>
<dbReference type="InterPro" id="IPR001315">
    <property type="entry name" value="CARD"/>
</dbReference>
<dbReference type="InterPro" id="IPR011029">
    <property type="entry name" value="DEATH-like_dom_sf"/>
</dbReference>
<dbReference type="InterPro" id="IPR008144">
    <property type="entry name" value="Guanylate_kin-like_dom"/>
</dbReference>
<dbReference type="InterPro" id="IPR027417">
    <property type="entry name" value="P-loop_NTPase"/>
</dbReference>
<dbReference type="InterPro" id="IPR001478">
    <property type="entry name" value="PDZ"/>
</dbReference>
<dbReference type="InterPro" id="IPR036034">
    <property type="entry name" value="PDZ_sf"/>
</dbReference>
<dbReference type="PANTHER" id="PTHR14559">
    <property type="entry name" value="CASPASE RECRUITMENT DOMAIN FAMILY"/>
    <property type="match status" value="1"/>
</dbReference>
<dbReference type="PANTHER" id="PTHR14559:SF1">
    <property type="entry name" value="CASPASE RECRUITMENT DOMAIN-CONTAINING PROTEIN 14"/>
    <property type="match status" value="1"/>
</dbReference>
<dbReference type="Pfam" id="PF00619">
    <property type="entry name" value="CARD"/>
    <property type="match status" value="1"/>
</dbReference>
<dbReference type="SUPFAM" id="SSF47986">
    <property type="entry name" value="DEATH domain"/>
    <property type="match status" value="1"/>
</dbReference>
<dbReference type="SUPFAM" id="SSF52540">
    <property type="entry name" value="P-loop containing nucleoside triphosphate hydrolases"/>
    <property type="match status" value="1"/>
</dbReference>
<dbReference type="SUPFAM" id="SSF50156">
    <property type="entry name" value="PDZ domain-like"/>
    <property type="match status" value="1"/>
</dbReference>
<dbReference type="PROSITE" id="PS50209">
    <property type="entry name" value="CARD"/>
    <property type="match status" value="1"/>
</dbReference>
<dbReference type="PROSITE" id="PS50052">
    <property type="entry name" value="GUANYLATE_KINASE_2"/>
    <property type="match status" value="1"/>
</dbReference>
<dbReference type="PROSITE" id="PS50106">
    <property type="entry name" value="PDZ"/>
    <property type="match status" value="1"/>
</dbReference>
<comment type="function">
    <text evidence="5 7 12 13">Acts as a scaffolding protein that can activate the inflammatory transcription factor NF-kappa-B and p38/JNK MAP kinase signaling pathways. Forms a signaling complex with BCL10 and MALT1, and activates MALT1 proteolytic activity and inflammatory gene expression. MALT1 is indispensable for CARD14-induced activation of NF-kappa-B and p38/JNK MAP kinases (PubMed:11278692, PubMed:21302310, PubMed:27071417, PubMed:27113748). May play a role in signaling mediated by TRAF2, TRAF3 and TRAF6 and protects cells against apoptosis.</text>
</comment>
<comment type="function">
    <molecule>Isoform 3</molecule>
    <text evidence="7 11">Not able to activate the inflammatory transcription factor NF-kappa-B and may function as a dominant negative regulator (PubMed:21302310, PubMed:26358359).</text>
</comment>
<comment type="subunit">
    <text evidence="7 12 13">Interacts (via CARD domain) with BCL10 (via CARD domain) (PubMed:21302310). Forms a complex with MALT1 and BCL10; resulting in the formation of a CBM (CARD14-BLC10-MALT1) complex (PubMed:27071417, PubMed:27113748). Interacts with TRAF2, TRAF3 and TRAF6 (PubMed:21302310).</text>
</comment>
<comment type="interaction">
    <interactant intactId="EBI-50436205">
        <id>Q9BXL6-1</id>
    </interactant>
    <interactant intactId="EBI-958922">
        <id>O95999</id>
        <label>BCL10</label>
    </interactant>
    <organismsDiffer>false</organismsDiffer>
    <experiments>2</experiments>
</comment>
<comment type="interaction">
    <interactant intactId="EBI-12114736">
        <id>Q9BXL6-2</id>
    </interactant>
    <interactant intactId="EBI-958922">
        <id>O95999</id>
        <label>BCL10</label>
    </interactant>
    <organismsDiffer>false</organismsDiffer>
    <experiments>2</experiments>
</comment>
<comment type="interaction">
    <interactant intactId="EBI-12114736">
        <id>Q9BXL6-2</id>
    </interactant>
    <interactant intactId="EBI-1567797">
        <id>Q8WWY3</id>
        <label>PRPF31</label>
    </interactant>
    <organismsDiffer>false</organismsDiffer>
    <experiments>4</experiments>
</comment>
<comment type="interaction">
    <interactant intactId="EBI-12114736">
        <id>Q9BXL6-2</id>
    </interactant>
    <interactant intactId="EBI-11985915">
        <id>Q5T619</id>
        <label>ZNF648</label>
    </interactant>
    <organismsDiffer>false</organismsDiffer>
    <experiments>3</experiments>
</comment>
<comment type="subcellular location">
    <molecule>Isoform 1</molecule>
    <subcellularLocation>
        <location evidence="7">Cytoplasm</location>
    </subcellularLocation>
</comment>
<comment type="subcellular location">
    <molecule>Isoform 2</molecule>
    <subcellularLocation>
        <location evidence="7">Cytoplasm</location>
    </subcellularLocation>
</comment>
<comment type="subcellular location">
    <molecule>Isoform 3</molecule>
    <subcellularLocation>
        <location evidence="7">Cytoplasm</location>
    </subcellularLocation>
</comment>
<comment type="alternative products">
    <event type="alternative splicing"/>
    <isoform>
        <id>Q9BXL6-1</id>
        <name>1</name>
        <name evidence="17">CARD14fl</name>
        <name evidence="16">CARMA2fl</name>
        <sequence type="displayed"/>
    </isoform>
    <isoform>
        <id>Q9BXL6-2</id>
        <name>2</name>
        <name>Short</name>
        <name evidence="17">CARD14sh</name>
        <name evidence="16">CARMA2sh</name>
        <sequence type="described" ref="VSP_047403"/>
    </isoform>
    <isoform>
        <id>Q9BXL6-3</id>
        <name>3</name>
        <name>Cardless</name>
        <name>CARD14cardless</name>
        <name evidence="16">CARMA2cl</name>
        <sequence type="described" ref="VSP_047400 VSP_047401 VSP_047402"/>
    </isoform>
</comment>
<comment type="tissue specificity">
    <text evidence="8">Isoform 1 is detected in placenta and epidermal keratinocytes (PubMed:22521418). Isoform 2 is detected in leukocytes and fetal brain (PubMed:22521418).</text>
</comment>
<comment type="domain">
    <text evidence="12">A linker region between the coiled-coil and PDZ region holds the protein in an inactive state (PubMed:27071417).</text>
</comment>
<comment type="disease" evidence="8 9 11 12 13">
    <disease id="DI-03462">
        <name>Psoriasis 2</name>
        <acronym>PSORS2</acronym>
        <description>A common, chronic inflammatory disease of the skin with multifactorial etiology. It is characterized by red, scaly plaques usually found on the scalp, elbows and knees. These lesions are caused by abnormal keratinocyte proliferation and infiltration of inflammatory cells into the dermis and epidermis.</description>
        <dbReference type="MIM" id="602723"/>
    </disease>
    <text>Disease susceptibility is associated with variants affecting the gene represented in this entry.</text>
</comment>
<comment type="disease" evidence="10 14">
    <disease id="DI-03513">
        <name>Pityriasis rubra pilaris</name>
        <acronym>PRP</acronym>
        <description>A rare, papulosquamous skin disease characterized by the appearance of keratotic follicular papules, well-demarcated salmon-colored erythematous plaques covered with fine powdery scales interspersed with distinct islands of uninvolved skin, and palmoplantar keratoderma. Most cases are sporadic. The rare familial cases show autosomal dominant inheritance with incomplete penetrance and variable expression. Familial PRP usually presents at birth or appears during the first years of life and runs a chronic course. It is characterized by prominent follicular hyperkeratosis, diffuse palmoplantar keratoderma, and erythema.</description>
        <dbReference type="MIM" id="173200"/>
    </disease>
    <text>The disease is caused by variants affecting the gene represented in this entry.</text>
</comment>
<comment type="caution">
    <text evidence="18">Supposed to contain a SH3 domain which is not detected by PROSITE, Pfam or SMART.</text>
</comment>
<comment type="online information" name="Caspase recruitment domain family, member 14 (CARD14)">
    <link uri="https://databases.lovd.nl/shared/genes/CARD14"/>
    <text>Leiden Open Variation Database (LOVD)</text>
</comment>